<proteinExistence type="inferred from homology"/>
<feature type="signal peptide" evidence="2">
    <location>
        <begin position="1"/>
        <end position="28"/>
    </location>
</feature>
<feature type="chain" id="PRO_0000451411" description="Evasin P1127" evidence="2">
    <location>
        <begin position="29"/>
        <end position="108"/>
    </location>
</feature>
<feature type="glycosylation site" description="N-linked (GlcNAc...) asparagine" evidence="3">
    <location>
        <position position="44"/>
    </location>
</feature>
<feature type="glycosylation site" description="N-linked (GlcNAc...) asparagine" evidence="3">
    <location>
        <position position="89"/>
    </location>
</feature>
<feature type="disulfide bond" evidence="1">
    <location>
        <begin position="41"/>
        <end position="63"/>
    </location>
</feature>
<feature type="disulfide bond" evidence="1">
    <location>
        <begin position="45"/>
        <end position="65"/>
    </location>
</feature>
<feature type="disulfide bond" evidence="1">
    <location>
        <begin position="56"/>
        <end position="76"/>
    </location>
</feature>
<accession>A0A0K8RJ67</accession>
<reference evidence="7" key="1">
    <citation type="journal article" date="2013" name="FASEB J.">
        <title>De novo Ixodes ricinus salivary gland transcriptome analysis using two next-generation sequencing methodologies.</title>
        <authorList>
            <person name="Schwarz A."/>
            <person name="von Reumont B.M."/>
            <person name="Erhart J."/>
            <person name="Chagas A.C."/>
            <person name="Ribeiro J.M."/>
            <person name="Kotsyfakis M."/>
        </authorList>
    </citation>
    <scope>NUCLEOTIDE SEQUENCE [LARGE SCALE MRNA]</scope>
    <source>
        <tissue evidence="7">Salivary gland</tissue>
    </source>
</reference>
<reference evidence="6" key="2">
    <citation type="journal article" date="2019" name="J. Biol. Chem.">
        <title>A knottin scaffold directs the CXC-chemokine-binding specificity of tick evasins.</title>
        <authorList>
            <person name="Lee A.W."/>
            <person name="Deruaz M."/>
            <person name="Lynch C."/>
            <person name="Davies G."/>
            <person name="Singh K."/>
            <person name="Alenazi Y."/>
            <person name="Eaton J.R.O."/>
            <person name="Kawamura A."/>
            <person name="Shaw J."/>
            <person name="Proudfoot A.E.I."/>
            <person name="Dias J.M."/>
            <person name="Bhattacharya S."/>
        </authorList>
    </citation>
    <scope>FUNCTION</scope>
</reference>
<name>E1127_IXORI</name>
<keyword id="KW-1015">Disulfide bond</keyword>
<keyword id="KW-0325">Glycoprotein</keyword>
<keyword id="KW-0964">Secreted</keyword>
<keyword id="KW-0732">Signal</keyword>
<organism evidence="7">
    <name type="scientific">Ixodes ricinus</name>
    <name type="common">Common tick</name>
    <name type="synonym">Acarus ricinus</name>
    <dbReference type="NCBI Taxonomy" id="34613"/>
    <lineage>
        <taxon>Eukaryota</taxon>
        <taxon>Metazoa</taxon>
        <taxon>Ecdysozoa</taxon>
        <taxon>Arthropoda</taxon>
        <taxon>Chelicerata</taxon>
        <taxon>Arachnida</taxon>
        <taxon>Acari</taxon>
        <taxon>Parasitiformes</taxon>
        <taxon>Ixodida</taxon>
        <taxon>Ixodoidea</taxon>
        <taxon>Ixodidae</taxon>
        <taxon>Ixodinae</taxon>
        <taxon>Ixodes</taxon>
    </lineage>
</organism>
<sequence length="108" mass="11800">MEAKTFAFLEIAMFIALGIQTFVAVTDAAGKDDEHFSVDYCGMNCTQQEDGSWTACSGRNGECRCYHESGKRSGLCLSTTYIDFSEYGNLSDSDIAAASPRLSMKESH</sequence>
<protein>
    <recommendedName>
        <fullName evidence="5">Evasin P1127</fullName>
    </recommendedName>
</protein>
<dbReference type="EMBL" id="GADI01002697">
    <property type="protein sequence ID" value="JAA71111.1"/>
    <property type="molecule type" value="mRNA"/>
</dbReference>
<dbReference type="GO" id="GO:0005576">
    <property type="term" value="C:extracellular region"/>
    <property type="evidence" value="ECO:0007669"/>
    <property type="project" value="UniProtKB-SubCell"/>
</dbReference>
<dbReference type="GO" id="GO:0019958">
    <property type="term" value="F:C-X-C chemokine binding"/>
    <property type="evidence" value="ECO:0000314"/>
    <property type="project" value="UniProtKB"/>
</dbReference>
<evidence type="ECO:0000250" key="1">
    <source>
        <dbReference type="UniProtKB" id="P0C8E8"/>
    </source>
</evidence>
<evidence type="ECO:0000255" key="2"/>
<evidence type="ECO:0000255" key="3">
    <source>
        <dbReference type="PROSITE-ProRule" id="PRU00498"/>
    </source>
</evidence>
<evidence type="ECO:0000269" key="4">
    <source>
    </source>
</evidence>
<evidence type="ECO:0000303" key="5">
    <source>
    </source>
</evidence>
<evidence type="ECO:0000305" key="6"/>
<evidence type="ECO:0000312" key="7">
    <source>
        <dbReference type="EMBL" id="JAA71111.1"/>
    </source>
</evidence>
<comment type="function">
    <text evidence="4">Salivary chemokine-binding protein which binds to host chemokines CXCL1, CXCL2, CXCL3, CXCL5 and CXCL8.</text>
</comment>
<comment type="subcellular location">
    <subcellularLocation>
        <location evidence="6">Secreted</location>
    </subcellularLocation>
</comment>